<proteinExistence type="inferred from homology"/>
<feature type="chain" id="PRO_0000155598" description="AdoMet-dependent rRNA methyltransferase SPB1">
    <location>
        <begin position="1"/>
        <end position="833"/>
    </location>
</feature>
<feature type="region of interest" description="Disordered" evidence="2">
    <location>
        <begin position="477"/>
        <end position="532"/>
    </location>
</feature>
<feature type="region of interest" description="Disordered" evidence="2">
    <location>
        <begin position="592"/>
        <end position="645"/>
    </location>
</feature>
<feature type="region of interest" description="Disordered" evidence="2">
    <location>
        <begin position="776"/>
        <end position="810"/>
    </location>
</feature>
<feature type="coiled-coil region" evidence="1">
    <location>
        <begin position="348"/>
        <end position="389"/>
    </location>
</feature>
<feature type="coiled-coil region" evidence="1">
    <location>
        <begin position="453"/>
        <end position="481"/>
    </location>
</feature>
<feature type="coiled-coil region" evidence="1">
    <location>
        <begin position="730"/>
        <end position="782"/>
    </location>
</feature>
<feature type="compositionally biased region" description="Basic and acidic residues" evidence="2">
    <location>
        <begin position="477"/>
        <end position="493"/>
    </location>
</feature>
<feature type="compositionally biased region" description="Acidic residues" evidence="2">
    <location>
        <begin position="505"/>
        <end position="532"/>
    </location>
</feature>
<feature type="compositionally biased region" description="Acidic residues" evidence="2">
    <location>
        <begin position="622"/>
        <end position="634"/>
    </location>
</feature>
<feature type="compositionally biased region" description="Basic and acidic residues" evidence="2">
    <location>
        <begin position="635"/>
        <end position="645"/>
    </location>
</feature>
<feature type="active site" description="Proton acceptor" evidence="1">
    <location>
        <position position="160"/>
    </location>
</feature>
<feature type="binding site" evidence="1">
    <location>
        <position position="59"/>
    </location>
    <ligand>
        <name>S-adenosyl-L-methionine</name>
        <dbReference type="ChEBI" id="CHEBI:59789"/>
    </ligand>
</feature>
<feature type="binding site" evidence="1">
    <location>
        <position position="61"/>
    </location>
    <ligand>
        <name>S-adenosyl-L-methionine</name>
        <dbReference type="ChEBI" id="CHEBI:59789"/>
    </ligand>
</feature>
<feature type="binding site" evidence="1">
    <location>
        <position position="79"/>
    </location>
    <ligand>
        <name>S-adenosyl-L-methionine</name>
        <dbReference type="ChEBI" id="CHEBI:59789"/>
    </ligand>
</feature>
<feature type="binding site" evidence="1">
    <location>
        <position position="95"/>
    </location>
    <ligand>
        <name>S-adenosyl-L-methionine</name>
        <dbReference type="ChEBI" id="CHEBI:59789"/>
    </ligand>
</feature>
<feature type="binding site" evidence="1">
    <location>
        <position position="120"/>
    </location>
    <ligand>
        <name>S-adenosyl-L-methionine</name>
        <dbReference type="ChEBI" id="CHEBI:59789"/>
    </ligand>
</feature>
<gene>
    <name evidence="1" type="primary">SPB1</name>
    <name type="ordered locus">KLLA0C00737g</name>
</gene>
<comment type="function">
    <text evidence="1">Required for proper assembly of pre-ribosomal particles during the biogenesis of the 60S ribosomal subunit.</text>
</comment>
<comment type="catalytic activity">
    <reaction evidence="1">
        <text>a ribonucleotide in rRNA + S-adenosyl-L-methionine = a 2'-O-methylribonucleotide in rRNA + S-adenosyl-L-homocysteine + H(+)</text>
        <dbReference type="Rhea" id="RHEA:48628"/>
        <dbReference type="Rhea" id="RHEA-COMP:12164"/>
        <dbReference type="Rhea" id="RHEA-COMP:12165"/>
        <dbReference type="ChEBI" id="CHEBI:15378"/>
        <dbReference type="ChEBI" id="CHEBI:57856"/>
        <dbReference type="ChEBI" id="CHEBI:59789"/>
        <dbReference type="ChEBI" id="CHEBI:90675"/>
        <dbReference type="ChEBI" id="CHEBI:90676"/>
    </reaction>
</comment>
<comment type="subunit">
    <text evidence="1">Component of the nucleolar and nucleoplasmic pre-60S ribosomal particle.</text>
</comment>
<comment type="subcellular location">
    <subcellularLocation>
        <location evidence="1">Nucleus</location>
        <location evidence="1">Nucleolus</location>
    </subcellularLocation>
</comment>
<comment type="similarity">
    <text evidence="1">Belongs to the class I-like SAM-binding methyltransferase superfamily. RNA methyltransferase RlmE family. SPB1 subfamily.</text>
</comment>
<sequence>MGKKTQKKNSKGRLDKYYYLAKEKGYRARSSFKIIQINEKYGHFLEKSKVVIDLCAAPGSWCQVASNLCPVNSLIIGVDIVPMKTMPNVITFQSDITTEDCRSKLRGYMKTWKADTVLHDGAPNVGLSWAQDAFTQSHLTLQALKLAVENLVVGGTFVTKIFRSKDYNKLIWVFQQLFEKVEATKPPASRNVSAEIFVVCKNFKAPKKLDPRLLDPKEVFEELPDGPQNMEAKVFNPEKKVRKRGGYEEGDYLLYHETGLMDFMKSEDPITMLGEYNKFIVDEEDHDWKIVKKLKQTTKEFLACIEDLKVLGRKDFKMILKWRKAARELLGLDEEEEKPEIEETPLTEEEQIEKELNTLQEKQRLSVKREKRKKNEMKQKEIVRMQLNMINPVDIGIEAAELGRESIFNLKTAEKTGILDKLAKGKRRMIFDQNELAIDNDIHIDENAPLDDRDELAEADELESQLDAMYSNYKERKSERDAKFRAKQARESSEADNWNGFEDKQSDEENEEETKDYVDDDDNSDLSDSDDDEAINQLIAKLKSRENSSKLSSKARALFSDSLFEGVEPDLPGKADLADSESVGDVKQLTKKRKLNPLPAEQISEAESSDEDSDFEIVANNEDGDVDSEYDSEEEAKRTKQEKHSKDIDIATVEAMTLAHQLALGHKTKHDLIEEGFNRYSFRDMENLPEWFVEEEKQHSKINKPITKEAAMAIKDKLKALNARPIKKVAEAKARKKHRAVARLEKLKKKAGLINDDSDKSEKDKAEEIAKLMRKVTKKAKQKPKVTVVVASGKNRGLSGRPKGVKGKYKMVDGVLKNEQRALKRIAKKHHKK</sequence>
<keyword id="KW-0175">Coiled coil</keyword>
<keyword id="KW-0489">Methyltransferase</keyword>
<keyword id="KW-0539">Nucleus</keyword>
<keyword id="KW-1185">Reference proteome</keyword>
<keyword id="KW-0690">Ribosome biogenesis</keyword>
<keyword id="KW-0698">rRNA processing</keyword>
<keyword id="KW-0949">S-adenosyl-L-methionine</keyword>
<keyword id="KW-0808">Transferase</keyword>
<organism>
    <name type="scientific">Kluyveromyces lactis (strain ATCC 8585 / CBS 2359 / DSM 70799 / NBRC 1267 / NRRL Y-1140 / WM37)</name>
    <name type="common">Yeast</name>
    <name type="synonym">Candida sphaerica</name>
    <dbReference type="NCBI Taxonomy" id="284590"/>
    <lineage>
        <taxon>Eukaryota</taxon>
        <taxon>Fungi</taxon>
        <taxon>Dikarya</taxon>
        <taxon>Ascomycota</taxon>
        <taxon>Saccharomycotina</taxon>
        <taxon>Saccharomycetes</taxon>
        <taxon>Saccharomycetales</taxon>
        <taxon>Saccharomycetaceae</taxon>
        <taxon>Kluyveromyces</taxon>
    </lineage>
</organism>
<name>SPB1_KLULA</name>
<protein>
    <recommendedName>
        <fullName evidence="1">AdoMet-dependent rRNA methyltransferase SPB1</fullName>
        <ecNumber evidence="1">2.1.1.-</ecNumber>
    </recommendedName>
    <alternativeName>
        <fullName evidence="1">2'-O-ribose RNA methyltransferase</fullName>
    </alternativeName>
    <alternativeName>
        <fullName evidence="1">S-adenosyl-L-methionine-dependent methyltransferase</fullName>
    </alternativeName>
</protein>
<reference key="1">
    <citation type="journal article" date="2004" name="Nature">
        <title>Genome evolution in yeasts.</title>
        <authorList>
            <person name="Dujon B."/>
            <person name="Sherman D."/>
            <person name="Fischer G."/>
            <person name="Durrens P."/>
            <person name="Casaregola S."/>
            <person name="Lafontaine I."/>
            <person name="de Montigny J."/>
            <person name="Marck C."/>
            <person name="Neuveglise C."/>
            <person name="Talla E."/>
            <person name="Goffard N."/>
            <person name="Frangeul L."/>
            <person name="Aigle M."/>
            <person name="Anthouard V."/>
            <person name="Babour A."/>
            <person name="Barbe V."/>
            <person name="Barnay S."/>
            <person name="Blanchin S."/>
            <person name="Beckerich J.-M."/>
            <person name="Beyne E."/>
            <person name="Bleykasten C."/>
            <person name="Boisrame A."/>
            <person name="Boyer J."/>
            <person name="Cattolico L."/>
            <person name="Confanioleri F."/>
            <person name="de Daruvar A."/>
            <person name="Despons L."/>
            <person name="Fabre E."/>
            <person name="Fairhead C."/>
            <person name="Ferry-Dumazet H."/>
            <person name="Groppi A."/>
            <person name="Hantraye F."/>
            <person name="Hennequin C."/>
            <person name="Jauniaux N."/>
            <person name="Joyet P."/>
            <person name="Kachouri R."/>
            <person name="Kerrest A."/>
            <person name="Koszul R."/>
            <person name="Lemaire M."/>
            <person name="Lesur I."/>
            <person name="Ma L."/>
            <person name="Muller H."/>
            <person name="Nicaud J.-M."/>
            <person name="Nikolski M."/>
            <person name="Oztas S."/>
            <person name="Ozier-Kalogeropoulos O."/>
            <person name="Pellenz S."/>
            <person name="Potier S."/>
            <person name="Richard G.-F."/>
            <person name="Straub M.-L."/>
            <person name="Suleau A."/>
            <person name="Swennen D."/>
            <person name="Tekaia F."/>
            <person name="Wesolowski-Louvel M."/>
            <person name="Westhof E."/>
            <person name="Wirth B."/>
            <person name="Zeniou-Meyer M."/>
            <person name="Zivanovic Y."/>
            <person name="Bolotin-Fukuhara M."/>
            <person name="Thierry A."/>
            <person name="Bouchier C."/>
            <person name="Caudron B."/>
            <person name="Scarpelli C."/>
            <person name="Gaillardin C."/>
            <person name="Weissenbach J."/>
            <person name="Wincker P."/>
            <person name="Souciet J.-L."/>
        </authorList>
    </citation>
    <scope>NUCLEOTIDE SEQUENCE [LARGE SCALE GENOMIC DNA]</scope>
    <source>
        <strain>ATCC 8585 / CBS 2359 / DSM 70799 / NBRC 1267 / NRRL Y-1140 / WM37</strain>
    </source>
</reference>
<evidence type="ECO:0000255" key="1">
    <source>
        <dbReference type="HAMAP-Rule" id="MF_03163"/>
    </source>
</evidence>
<evidence type="ECO:0000256" key="2">
    <source>
        <dbReference type="SAM" id="MobiDB-lite"/>
    </source>
</evidence>
<dbReference type="EC" id="2.1.1.-" evidence="1"/>
<dbReference type="EMBL" id="CR382123">
    <property type="protein sequence ID" value="CAH01078.1"/>
    <property type="molecule type" value="Genomic_DNA"/>
</dbReference>
<dbReference type="RefSeq" id="XP_452227.1">
    <property type="nucleotide sequence ID" value="XM_452227.1"/>
</dbReference>
<dbReference type="SMR" id="Q6CV12"/>
<dbReference type="FunCoup" id="Q6CV12">
    <property type="interactions" value="1219"/>
</dbReference>
<dbReference type="STRING" id="284590.Q6CV12"/>
<dbReference type="PaxDb" id="284590-Q6CV12"/>
<dbReference type="KEGG" id="kla:KLLA0_C00737g"/>
<dbReference type="eggNOG" id="KOG1098">
    <property type="taxonomic scope" value="Eukaryota"/>
</dbReference>
<dbReference type="HOGENOM" id="CLU_009422_8_1_1"/>
<dbReference type="InParanoid" id="Q6CV12"/>
<dbReference type="OMA" id="QRKDKYY"/>
<dbReference type="Proteomes" id="UP000000598">
    <property type="component" value="Chromosome C"/>
</dbReference>
<dbReference type="GO" id="GO:0005730">
    <property type="term" value="C:nucleolus"/>
    <property type="evidence" value="ECO:0007669"/>
    <property type="project" value="UniProtKB-SubCell"/>
</dbReference>
<dbReference type="GO" id="GO:0030687">
    <property type="term" value="C:preribosome, large subunit precursor"/>
    <property type="evidence" value="ECO:0007669"/>
    <property type="project" value="UniProtKB-UniRule"/>
</dbReference>
<dbReference type="GO" id="GO:0070039">
    <property type="term" value="F:rRNA (guanosine-2'-O-)-methyltransferase activity"/>
    <property type="evidence" value="ECO:0007669"/>
    <property type="project" value="UniProtKB-UniRule"/>
</dbReference>
<dbReference type="GO" id="GO:0008650">
    <property type="term" value="F:rRNA (uridine-2'-O-)-methyltransferase activity"/>
    <property type="evidence" value="ECO:0007669"/>
    <property type="project" value="UniProtKB-UniRule"/>
</dbReference>
<dbReference type="GO" id="GO:0000466">
    <property type="term" value="P:maturation of 5.8S rRNA from tricistronic rRNA transcript (SSU-rRNA, 5.8S rRNA, LSU-rRNA)"/>
    <property type="evidence" value="ECO:0007669"/>
    <property type="project" value="TreeGrafter"/>
</dbReference>
<dbReference type="GO" id="GO:0000463">
    <property type="term" value="P:maturation of LSU-rRNA from tricistronic rRNA transcript (SSU-rRNA, 5.8S rRNA, LSU-rRNA)"/>
    <property type="evidence" value="ECO:0007669"/>
    <property type="project" value="TreeGrafter"/>
</dbReference>
<dbReference type="FunFam" id="3.40.50.150:FF:000004">
    <property type="entry name" value="AdoMet-dependent rRNA methyltransferase SPB1"/>
    <property type="match status" value="1"/>
</dbReference>
<dbReference type="Gene3D" id="3.40.50.150">
    <property type="entry name" value="Vaccinia Virus protein VP39"/>
    <property type="match status" value="1"/>
</dbReference>
<dbReference type="HAMAP" id="MF_01547">
    <property type="entry name" value="RNA_methyltr_E"/>
    <property type="match status" value="1"/>
</dbReference>
<dbReference type="HAMAP" id="MF_03163">
    <property type="entry name" value="RNA_methyltr_E_SPB1"/>
    <property type="match status" value="1"/>
</dbReference>
<dbReference type="InterPro" id="IPR050082">
    <property type="entry name" value="RNA_methyltr_RlmE"/>
</dbReference>
<dbReference type="InterPro" id="IPR002877">
    <property type="entry name" value="RNA_MeTrfase_FtsJ_dom"/>
</dbReference>
<dbReference type="InterPro" id="IPR015507">
    <property type="entry name" value="rRNA-MeTfrase_E"/>
</dbReference>
<dbReference type="InterPro" id="IPR012920">
    <property type="entry name" value="rRNA_MeTfrase_SPB1-like_C"/>
</dbReference>
<dbReference type="InterPro" id="IPR024576">
    <property type="entry name" value="rRNA_MeTfrase_Spb1_DUF3381"/>
</dbReference>
<dbReference type="InterPro" id="IPR029063">
    <property type="entry name" value="SAM-dependent_MTases_sf"/>
</dbReference>
<dbReference type="InterPro" id="IPR028589">
    <property type="entry name" value="SPB1-like"/>
</dbReference>
<dbReference type="PANTHER" id="PTHR10920:SF13">
    <property type="entry name" value="PRE-RRNA 2'-O-RIBOSE RNA METHYLTRANSFERASE FTSJ3"/>
    <property type="match status" value="1"/>
</dbReference>
<dbReference type="PANTHER" id="PTHR10920">
    <property type="entry name" value="RIBOSOMAL RNA METHYLTRANSFERASE"/>
    <property type="match status" value="1"/>
</dbReference>
<dbReference type="Pfam" id="PF11861">
    <property type="entry name" value="DUF3381"/>
    <property type="match status" value="1"/>
</dbReference>
<dbReference type="Pfam" id="PF01728">
    <property type="entry name" value="FtsJ"/>
    <property type="match status" value="1"/>
</dbReference>
<dbReference type="Pfam" id="PF07780">
    <property type="entry name" value="Spb1_C"/>
    <property type="match status" value="1"/>
</dbReference>
<dbReference type="SUPFAM" id="SSF53335">
    <property type="entry name" value="S-adenosyl-L-methionine-dependent methyltransferases"/>
    <property type="match status" value="1"/>
</dbReference>
<accession>Q6CV12</accession>